<accession>Q46GA0</accession>
<reference key="1">
    <citation type="journal article" date="2006" name="J. Bacteriol.">
        <title>The Methanosarcina barkeri genome: comparative analysis with Methanosarcina acetivorans and Methanosarcina mazei reveals extensive rearrangement within methanosarcinal genomes.</title>
        <authorList>
            <person name="Maeder D.L."/>
            <person name="Anderson I."/>
            <person name="Brettin T.S."/>
            <person name="Bruce D.C."/>
            <person name="Gilna P."/>
            <person name="Han C.S."/>
            <person name="Lapidus A."/>
            <person name="Metcalf W.W."/>
            <person name="Saunders E."/>
            <person name="Tapia R."/>
            <person name="Sowers K.R."/>
        </authorList>
    </citation>
    <scope>NUCLEOTIDE SEQUENCE [LARGE SCALE GENOMIC DNA]</scope>
    <source>
        <strain>Fusaro / DSM 804</strain>
    </source>
</reference>
<protein>
    <recommendedName>
        <fullName evidence="1">Large ribosomal subunit protein uL22</fullName>
    </recommendedName>
    <alternativeName>
        <fullName evidence="3">50S ribosomal protein L22</fullName>
    </alternativeName>
</protein>
<feature type="chain" id="PRO_0000243248" description="Large ribosomal subunit protein uL22">
    <location>
        <begin position="1"/>
        <end position="151"/>
    </location>
</feature>
<feature type="region of interest" description="Disordered" evidence="2">
    <location>
        <begin position="1"/>
        <end position="25"/>
    </location>
</feature>
<keyword id="KW-0687">Ribonucleoprotein</keyword>
<keyword id="KW-0689">Ribosomal protein</keyword>
<keyword id="KW-0694">RNA-binding</keyword>
<keyword id="KW-0699">rRNA-binding</keyword>
<name>RL22_METBF</name>
<sequence>MARINYSVKEDPETTSKAMGSELHISPKKSREVCCKIKGMKVPEARKFLEDVIALKQAVPFKRHHDGSGHRKGPMAAGRYPVSASKEILKILRNAESNAEYKGLEPANMYITHAAIQRGRVIRGFMPRARGRATPKDTETVNIEMILSEVR</sequence>
<evidence type="ECO:0000255" key="1">
    <source>
        <dbReference type="HAMAP-Rule" id="MF_01331"/>
    </source>
</evidence>
<evidence type="ECO:0000256" key="2">
    <source>
        <dbReference type="SAM" id="MobiDB-lite"/>
    </source>
</evidence>
<evidence type="ECO:0000305" key="3"/>
<proteinExistence type="inferred from homology"/>
<dbReference type="EMBL" id="CP000099">
    <property type="protein sequence ID" value="AAZ69092.1"/>
    <property type="molecule type" value="Genomic_DNA"/>
</dbReference>
<dbReference type="SMR" id="Q46GA0"/>
<dbReference type="STRING" id="269797.Mbar_A0105"/>
<dbReference type="PaxDb" id="269797-Mbar_A0105"/>
<dbReference type="KEGG" id="mba:Mbar_A0105"/>
<dbReference type="eggNOG" id="arCOG04098">
    <property type="taxonomic scope" value="Archaea"/>
</dbReference>
<dbReference type="HOGENOM" id="CLU_083987_0_2_2"/>
<dbReference type="OrthoDB" id="314984at2157"/>
<dbReference type="GO" id="GO:0022625">
    <property type="term" value="C:cytosolic large ribosomal subunit"/>
    <property type="evidence" value="ECO:0007669"/>
    <property type="project" value="TreeGrafter"/>
</dbReference>
<dbReference type="GO" id="GO:0019843">
    <property type="term" value="F:rRNA binding"/>
    <property type="evidence" value="ECO:0007669"/>
    <property type="project" value="UniProtKB-UniRule"/>
</dbReference>
<dbReference type="GO" id="GO:0003735">
    <property type="term" value="F:structural constituent of ribosome"/>
    <property type="evidence" value="ECO:0007669"/>
    <property type="project" value="InterPro"/>
</dbReference>
<dbReference type="GO" id="GO:0002181">
    <property type="term" value="P:cytoplasmic translation"/>
    <property type="evidence" value="ECO:0007669"/>
    <property type="project" value="TreeGrafter"/>
</dbReference>
<dbReference type="CDD" id="cd00336">
    <property type="entry name" value="Ribosomal_L22"/>
    <property type="match status" value="1"/>
</dbReference>
<dbReference type="FunFam" id="3.90.470.10:FF:000015">
    <property type="entry name" value="50S ribosomal protein L22"/>
    <property type="match status" value="1"/>
</dbReference>
<dbReference type="Gene3D" id="3.90.470.10">
    <property type="entry name" value="Ribosomal protein L22/L17"/>
    <property type="match status" value="1"/>
</dbReference>
<dbReference type="HAMAP" id="MF_01331_A">
    <property type="entry name" value="Ribosomal_uL22_A"/>
    <property type="match status" value="1"/>
</dbReference>
<dbReference type="InterPro" id="IPR001063">
    <property type="entry name" value="Ribosomal_uL22"/>
</dbReference>
<dbReference type="InterPro" id="IPR018260">
    <property type="entry name" value="Ribosomal_uL22_CS"/>
</dbReference>
<dbReference type="InterPro" id="IPR005721">
    <property type="entry name" value="Ribosomal_uL22_euk/arc"/>
</dbReference>
<dbReference type="InterPro" id="IPR036394">
    <property type="entry name" value="Ribosomal_uL22_sf"/>
</dbReference>
<dbReference type="NCBIfam" id="NF003260">
    <property type="entry name" value="PRK04223.1"/>
    <property type="match status" value="1"/>
</dbReference>
<dbReference type="NCBIfam" id="TIGR01038">
    <property type="entry name" value="uL22_arch_euk"/>
    <property type="match status" value="1"/>
</dbReference>
<dbReference type="PANTHER" id="PTHR11593">
    <property type="entry name" value="60S RIBOSOMAL PROTEIN L17"/>
    <property type="match status" value="1"/>
</dbReference>
<dbReference type="PANTHER" id="PTHR11593:SF10">
    <property type="entry name" value="60S RIBOSOMAL PROTEIN L17"/>
    <property type="match status" value="1"/>
</dbReference>
<dbReference type="Pfam" id="PF00237">
    <property type="entry name" value="Ribosomal_L22"/>
    <property type="match status" value="1"/>
</dbReference>
<dbReference type="SUPFAM" id="SSF54843">
    <property type="entry name" value="Ribosomal protein L22"/>
    <property type="match status" value="1"/>
</dbReference>
<dbReference type="PROSITE" id="PS00464">
    <property type="entry name" value="RIBOSOMAL_L22"/>
    <property type="match status" value="1"/>
</dbReference>
<comment type="function">
    <text evidence="1">This protein binds specifically to 23S rRNA. It makes multiple contacts with different domains of the 23S rRNA in the assembled 50S subunit and ribosome.</text>
</comment>
<comment type="function">
    <text evidence="1">The globular domain of the protein is located near the polypeptide exit tunnel on the outside of the subunit, while an extended beta-hairpin is found that lines the wall of the exit tunnel in the center of the 70S ribosome.</text>
</comment>
<comment type="subunit">
    <text evidence="1">Part of the 50S ribosomal subunit.</text>
</comment>
<comment type="similarity">
    <text evidence="1">Belongs to the universal ribosomal protein uL22 family.</text>
</comment>
<gene>
    <name evidence="1" type="primary">rpl22</name>
    <name type="ordered locus">Mbar_A0105</name>
</gene>
<organism>
    <name type="scientific">Methanosarcina barkeri (strain Fusaro / DSM 804)</name>
    <dbReference type="NCBI Taxonomy" id="269797"/>
    <lineage>
        <taxon>Archaea</taxon>
        <taxon>Methanobacteriati</taxon>
        <taxon>Methanobacteriota</taxon>
        <taxon>Stenosarchaea group</taxon>
        <taxon>Methanomicrobia</taxon>
        <taxon>Methanosarcinales</taxon>
        <taxon>Methanosarcinaceae</taxon>
        <taxon>Methanosarcina</taxon>
    </lineage>
</organism>